<gene>
    <name evidence="1" type="primary">engB</name>
    <name type="ordered locus">Jann_0634</name>
</gene>
<protein>
    <recommendedName>
        <fullName evidence="1">Probable GTP-binding protein EngB</fullName>
    </recommendedName>
</protein>
<feature type="chain" id="PRO_0000266878" description="Probable GTP-binding protein EngB">
    <location>
        <begin position="1"/>
        <end position="218"/>
    </location>
</feature>
<feature type="domain" description="EngB-type G" evidence="1">
    <location>
        <begin position="44"/>
        <end position="218"/>
    </location>
</feature>
<feature type="binding site" evidence="1">
    <location>
        <begin position="52"/>
        <end position="59"/>
    </location>
    <ligand>
        <name>GTP</name>
        <dbReference type="ChEBI" id="CHEBI:37565"/>
    </ligand>
</feature>
<feature type="binding site" evidence="1">
    <location>
        <position position="59"/>
    </location>
    <ligand>
        <name>Mg(2+)</name>
        <dbReference type="ChEBI" id="CHEBI:18420"/>
    </ligand>
</feature>
<feature type="binding site" evidence="1">
    <location>
        <begin position="79"/>
        <end position="83"/>
    </location>
    <ligand>
        <name>GTP</name>
        <dbReference type="ChEBI" id="CHEBI:37565"/>
    </ligand>
</feature>
<feature type="binding site" evidence="1">
    <location>
        <position position="81"/>
    </location>
    <ligand>
        <name>Mg(2+)</name>
        <dbReference type="ChEBI" id="CHEBI:18420"/>
    </ligand>
</feature>
<feature type="binding site" evidence="1">
    <location>
        <begin position="97"/>
        <end position="100"/>
    </location>
    <ligand>
        <name>GTP</name>
        <dbReference type="ChEBI" id="CHEBI:37565"/>
    </ligand>
</feature>
<feature type="binding site" evidence="1">
    <location>
        <begin position="164"/>
        <end position="167"/>
    </location>
    <ligand>
        <name>GTP</name>
        <dbReference type="ChEBI" id="CHEBI:37565"/>
    </ligand>
</feature>
<feature type="binding site" evidence="1">
    <location>
        <begin position="198"/>
        <end position="200"/>
    </location>
    <ligand>
        <name>GTP</name>
        <dbReference type="ChEBI" id="CHEBI:37565"/>
    </ligand>
</feature>
<dbReference type="EMBL" id="CP000264">
    <property type="protein sequence ID" value="ABD53551.1"/>
    <property type="molecule type" value="Genomic_DNA"/>
</dbReference>
<dbReference type="RefSeq" id="WP_011453759.1">
    <property type="nucleotide sequence ID" value="NC_007802.1"/>
</dbReference>
<dbReference type="SMR" id="Q28UR1"/>
<dbReference type="STRING" id="290400.Jann_0634"/>
<dbReference type="KEGG" id="jan:Jann_0634"/>
<dbReference type="eggNOG" id="COG0218">
    <property type="taxonomic scope" value="Bacteria"/>
</dbReference>
<dbReference type="HOGENOM" id="CLU_033732_2_0_5"/>
<dbReference type="OrthoDB" id="9804921at2"/>
<dbReference type="Proteomes" id="UP000008326">
    <property type="component" value="Chromosome"/>
</dbReference>
<dbReference type="GO" id="GO:0005829">
    <property type="term" value="C:cytosol"/>
    <property type="evidence" value="ECO:0007669"/>
    <property type="project" value="TreeGrafter"/>
</dbReference>
<dbReference type="GO" id="GO:0005525">
    <property type="term" value="F:GTP binding"/>
    <property type="evidence" value="ECO:0007669"/>
    <property type="project" value="UniProtKB-UniRule"/>
</dbReference>
<dbReference type="GO" id="GO:0046872">
    <property type="term" value="F:metal ion binding"/>
    <property type="evidence" value="ECO:0007669"/>
    <property type="project" value="UniProtKB-KW"/>
</dbReference>
<dbReference type="GO" id="GO:0000917">
    <property type="term" value="P:division septum assembly"/>
    <property type="evidence" value="ECO:0007669"/>
    <property type="project" value="UniProtKB-KW"/>
</dbReference>
<dbReference type="CDD" id="cd01876">
    <property type="entry name" value="YihA_EngB"/>
    <property type="match status" value="1"/>
</dbReference>
<dbReference type="Gene3D" id="3.40.50.300">
    <property type="entry name" value="P-loop containing nucleotide triphosphate hydrolases"/>
    <property type="match status" value="1"/>
</dbReference>
<dbReference type="HAMAP" id="MF_00321">
    <property type="entry name" value="GTPase_EngB"/>
    <property type="match status" value="1"/>
</dbReference>
<dbReference type="InterPro" id="IPR030393">
    <property type="entry name" value="G_ENGB_dom"/>
</dbReference>
<dbReference type="InterPro" id="IPR006073">
    <property type="entry name" value="GTP-bd"/>
</dbReference>
<dbReference type="InterPro" id="IPR019987">
    <property type="entry name" value="GTP-bd_ribosome_bio_YsxC"/>
</dbReference>
<dbReference type="InterPro" id="IPR027417">
    <property type="entry name" value="P-loop_NTPase"/>
</dbReference>
<dbReference type="NCBIfam" id="TIGR03598">
    <property type="entry name" value="GTPase_YsxC"/>
    <property type="match status" value="1"/>
</dbReference>
<dbReference type="PANTHER" id="PTHR11649:SF13">
    <property type="entry name" value="ENGB-TYPE G DOMAIN-CONTAINING PROTEIN"/>
    <property type="match status" value="1"/>
</dbReference>
<dbReference type="PANTHER" id="PTHR11649">
    <property type="entry name" value="MSS1/TRME-RELATED GTP-BINDING PROTEIN"/>
    <property type="match status" value="1"/>
</dbReference>
<dbReference type="Pfam" id="PF01926">
    <property type="entry name" value="MMR_HSR1"/>
    <property type="match status" value="1"/>
</dbReference>
<dbReference type="SUPFAM" id="SSF52540">
    <property type="entry name" value="P-loop containing nucleoside triphosphate hydrolases"/>
    <property type="match status" value="1"/>
</dbReference>
<dbReference type="PROSITE" id="PS51706">
    <property type="entry name" value="G_ENGB"/>
    <property type="match status" value="1"/>
</dbReference>
<sequence>MTTLPFPLAEAPDALTEERGRKLFAGNTDFLKGVVAMDGLPPADRIEVCFAGRSNVGKSTLINALTGRKGLARASNTPGRTQEINYFTLLDSHYLVDLPGYGYAEAPLHVVQQWQALLKSYLQGRATLRRAFVLIDARHGVKAVDEEIMKLLDIAAVPFQTVLTKSDKVKGRDRDASLARTRKALANHPAAYPEIILTSSEKGDGIPTLRATIATIET</sequence>
<evidence type="ECO:0000255" key="1">
    <source>
        <dbReference type="HAMAP-Rule" id="MF_00321"/>
    </source>
</evidence>
<keyword id="KW-0131">Cell cycle</keyword>
<keyword id="KW-0132">Cell division</keyword>
<keyword id="KW-0342">GTP-binding</keyword>
<keyword id="KW-0460">Magnesium</keyword>
<keyword id="KW-0479">Metal-binding</keyword>
<keyword id="KW-0547">Nucleotide-binding</keyword>
<keyword id="KW-1185">Reference proteome</keyword>
<keyword id="KW-0717">Septation</keyword>
<organism>
    <name type="scientific">Jannaschia sp. (strain CCS1)</name>
    <dbReference type="NCBI Taxonomy" id="290400"/>
    <lineage>
        <taxon>Bacteria</taxon>
        <taxon>Pseudomonadati</taxon>
        <taxon>Pseudomonadota</taxon>
        <taxon>Alphaproteobacteria</taxon>
        <taxon>Rhodobacterales</taxon>
        <taxon>Roseobacteraceae</taxon>
        <taxon>Jannaschia</taxon>
    </lineage>
</organism>
<reference key="1">
    <citation type="submission" date="2006-02" db="EMBL/GenBank/DDBJ databases">
        <title>Complete sequence of chromosome of Jannaschia sp. CCS1.</title>
        <authorList>
            <consortium name="US DOE Joint Genome Institute"/>
            <person name="Copeland A."/>
            <person name="Lucas S."/>
            <person name="Lapidus A."/>
            <person name="Barry K."/>
            <person name="Detter J.C."/>
            <person name="Glavina del Rio T."/>
            <person name="Hammon N."/>
            <person name="Israni S."/>
            <person name="Pitluck S."/>
            <person name="Brettin T."/>
            <person name="Bruce D."/>
            <person name="Han C."/>
            <person name="Tapia R."/>
            <person name="Gilna P."/>
            <person name="Chertkov O."/>
            <person name="Saunders E."/>
            <person name="Schmutz J."/>
            <person name="Larimer F."/>
            <person name="Land M."/>
            <person name="Kyrpides N."/>
            <person name="Lykidis A."/>
            <person name="Moran M.A."/>
            <person name="Belas R."/>
            <person name="Ye W."/>
            <person name="Buchan A."/>
            <person name="Gonzalez J.M."/>
            <person name="Schell M.A."/>
            <person name="Richardson P."/>
        </authorList>
    </citation>
    <scope>NUCLEOTIDE SEQUENCE [LARGE SCALE GENOMIC DNA]</scope>
    <source>
        <strain>CCS1</strain>
    </source>
</reference>
<name>ENGB_JANSC</name>
<accession>Q28UR1</accession>
<comment type="function">
    <text evidence="1">Necessary for normal cell division and for the maintenance of normal septation.</text>
</comment>
<comment type="cofactor">
    <cofactor evidence="1">
        <name>Mg(2+)</name>
        <dbReference type="ChEBI" id="CHEBI:18420"/>
    </cofactor>
</comment>
<comment type="similarity">
    <text evidence="1">Belongs to the TRAFAC class TrmE-Era-EngA-EngB-Septin-like GTPase superfamily. EngB GTPase family.</text>
</comment>
<proteinExistence type="inferred from homology"/>